<reference key="1">
    <citation type="journal article" date="1997" name="J. Biol. Chem.">
        <title>Induction of IgE antibody responses by glutathione S-transferase from the German cockroach (Blattella germanica).</title>
        <authorList>
            <person name="Arruda L.K."/>
            <person name="Vailes L.D."/>
            <person name="Platts-Mills T.A.E."/>
            <person name="Hayden M.L."/>
            <person name="Chapman M.D."/>
        </authorList>
    </citation>
    <scope>NUCLEOTIDE SEQUENCE [MRNA] OF 5-204</scope>
    <scope>PROTEIN SEQUENCE OF 2-39</scope>
</reference>
<evidence type="ECO:0000250" key="1">
    <source>
        <dbReference type="UniProtKB" id="O60760"/>
    </source>
</evidence>
<evidence type="ECO:0000250" key="2">
    <source>
        <dbReference type="UniProtKB" id="P46088"/>
    </source>
</evidence>
<evidence type="ECO:0000269" key="3">
    <source>
    </source>
</evidence>
<evidence type="ECO:0000305" key="4"/>
<evidence type="ECO:0007829" key="5">
    <source>
        <dbReference type="PDB" id="4Q5R"/>
    </source>
</evidence>
<feature type="initiator methionine" description="Removed" evidence="3">
    <location>
        <position position="1"/>
    </location>
</feature>
<feature type="chain" id="PRO_0000185916" description="Glutathione S-transferase">
    <location>
        <begin position="2"/>
        <end position="204"/>
    </location>
</feature>
<feature type="domain" description="GST N-terminal">
    <location>
        <begin position="3"/>
        <end position="80"/>
    </location>
</feature>
<feature type="domain" description="GST C-terminal">
    <location>
        <begin position="82"/>
        <end position="204"/>
    </location>
</feature>
<feature type="binding site" evidence="1">
    <location>
        <position position="9"/>
    </location>
    <ligand>
        <name>glutathione</name>
        <dbReference type="ChEBI" id="CHEBI:57925"/>
    </ligand>
</feature>
<feature type="binding site" evidence="1">
    <location>
        <position position="40"/>
    </location>
    <ligand>
        <name>glutathione</name>
        <dbReference type="ChEBI" id="CHEBI:57925"/>
    </ligand>
</feature>
<feature type="binding site" evidence="2">
    <location>
        <position position="44"/>
    </location>
    <ligand>
        <name>glutathione</name>
        <dbReference type="ChEBI" id="CHEBI:57925"/>
    </ligand>
</feature>
<feature type="binding site" evidence="1">
    <location>
        <begin position="50"/>
        <end position="52"/>
    </location>
    <ligand>
        <name>glutathione</name>
        <dbReference type="ChEBI" id="CHEBI:57925"/>
    </ligand>
</feature>
<feature type="binding site" evidence="1">
    <location>
        <begin position="64"/>
        <end position="65"/>
    </location>
    <ligand>
        <name>glutathione</name>
        <dbReference type="ChEBI" id="CHEBI:57925"/>
    </ligand>
</feature>
<feature type="sequence conflict" description="In Ref. 1; AA sequence." evidence="4" ref="1">
    <original>C</original>
    <variation>F</variation>
    <location>
        <position position="10"/>
    </location>
</feature>
<feature type="strand" evidence="5">
    <location>
        <begin position="5"/>
        <end position="9"/>
    </location>
</feature>
<feature type="strand" evidence="5">
    <location>
        <begin position="11"/>
        <end position="13"/>
    </location>
</feature>
<feature type="turn" evidence="5">
    <location>
        <begin position="14"/>
        <end position="16"/>
    </location>
</feature>
<feature type="helix" evidence="5">
    <location>
        <begin position="17"/>
        <end position="25"/>
    </location>
</feature>
<feature type="strand" evidence="5">
    <location>
        <begin position="31"/>
        <end position="34"/>
    </location>
</feature>
<feature type="helix" evidence="5">
    <location>
        <begin position="37"/>
        <end position="39"/>
    </location>
</feature>
<feature type="helix" evidence="5">
    <location>
        <begin position="40"/>
        <end position="43"/>
    </location>
</feature>
<feature type="helix" evidence="5">
    <location>
        <begin position="44"/>
        <end position="46"/>
    </location>
</feature>
<feature type="strand" evidence="5">
    <location>
        <begin position="54"/>
        <end position="57"/>
    </location>
</feature>
<feature type="strand" evidence="5">
    <location>
        <begin position="60"/>
        <end position="63"/>
    </location>
</feature>
<feature type="helix" evidence="5">
    <location>
        <begin position="65"/>
        <end position="75"/>
    </location>
</feature>
<feature type="helix" evidence="5">
    <location>
        <begin position="83"/>
        <end position="107"/>
    </location>
</feature>
<feature type="helix" evidence="5">
    <location>
        <begin position="112"/>
        <end position="124"/>
    </location>
</feature>
<feature type="helix" evidence="5">
    <location>
        <begin position="126"/>
        <end position="140"/>
    </location>
</feature>
<feature type="strand" evidence="5">
    <location>
        <begin position="143"/>
        <end position="146"/>
    </location>
</feature>
<feature type="helix" evidence="5">
    <location>
        <begin position="152"/>
        <end position="168"/>
    </location>
</feature>
<feature type="turn" evidence="5">
    <location>
        <begin position="172"/>
        <end position="175"/>
    </location>
</feature>
<feature type="helix" evidence="5">
    <location>
        <begin position="177"/>
        <end position="188"/>
    </location>
</feature>
<feature type="helix" evidence="5">
    <location>
        <begin position="190"/>
        <end position="198"/>
    </location>
</feature>
<accession>O18598</accession>
<sequence>MAPSYKLTYCPVKALGEPIRFLLSYGEKDFEDYRFQEGDWPNLKPSMPFGKTPVLEIDGKQTHQSVAISRYLGKQFGLSGKDDWENLEIDMIVDTISDFRAAIANYHYDADENSKQKKWDPLKKETIPYYTKKFDEVVKANGGYLAAGKLTWADFYFVAILDYLNHMAKEDLVANQPNLKALREKVLGLPAIKAWVAKRPPTDL</sequence>
<protein>
    <recommendedName>
        <fullName>Glutathione S-transferase</fullName>
        <ecNumber>2.5.1.18</ecNumber>
    </recommendedName>
    <alternativeName>
        <fullName>GST class-sigma</fullName>
    </alternativeName>
    <alternativeName>
        <fullName>Major allergen Bla g 5</fullName>
    </alternativeName>
    <allergenName>Bla g 5</allergenName>
</protein>
<name>GST1_BLAGE</name>
<keyword id="KW-0002">3D-structure</keyword>
<keyword id="KW-0020">Allergen</keyword>
<keyword id="KW-0903">Direct protein sequencing</keyword>
<keyword id="KW-0808">Transferase</keyword>
<dbReference type="EC" id="2.5.1.18"/>
<dbReference type="EMBL" id="U92412">
    <property type="protein sequence ID" value="AAB72147.1"/>
    <property type="molecule type" value="mRNA"/>
</dbReference>
<dbReference type="PDB" id="4Q5R">
    <property type="method" value="X-ray"/>
    <property type="resolution" value="2.25 A"/>
    <property type="chains" value="A/B/C/D/E/F=1-204"/>
</dbReference>
<dbReference type="PDBsum" id="4Q5R"/>
<dbReference type="SMR" id="O18598"/>
<dbReference type="Allergome" id="144">
    <property type="allergen name" value="Bla g 5"/>
</dbReference>
<dbReference type="Allergome" id="3142">
    <property type="allergen name" value="Bla g 5.0101"/>
</dbReference>
<dbReference type="EvolutionaryTrace" id="O18598"/>
<dbReference type="GO" id="GO:0004364">
    <property type="term" value="F:glutathione transferase activity"/>
    <property type="evidence" value="ECO:0007669"/>
    <property type="project" value="UniProtKB-EC"/>
</dbReference>
<dbReference type="GO" id="GO:0006749">
    <property type="term" value="P:glutathione metabolic process"/>
    <property type="evidence" value="ECO:0007669"/>
    <property type="project" value="TreeGrafter"/>
</dbReference>
<dbReference type="CDD" id="cd03192">
    <property type="entry name" value="GST_C_Sigma_like"/>
    <property type="match status" value="1"/>
</dbReference>
<dbReference type="CDD" id="cd03039">
    <property type="entry name" value="GST_N_Sigma_like"/>
    <property type="match status" value="1"/>
</dbReference>
<dbReference type="FunFam" id="1.20.1050.10:FF:000030">
    <property type="entry name" value="Glutathione S-transferase S1"/>
    <property type="match status" value="1"/>
</dbReference>
<dbReference type="FunFam" id="3.40.30.10:FF:000035">
    <property type="entry name" value="hematopoietic prostaglandin D synthase"/>
    <property type="match status" value="1"/>
</dbReference>
<dbReference type="Gene3D" id="1.20.1050.10">
    <property type="match status" value="1"/>
</dbReference>
<dbReference type="Gene3D" id="3.40.30.10">
    <property type="entry name" value="Glutaredoxin"/>
    <property type="match status" value="1"/>
</dbReference>
<dbReference type="InterPro" id="IPR010987">
    <property type="entry name" value="Glutathione-S-Trfase_C-like"/>
</dbReference>
<dbReference type="InterPro" id="IPR036282">
    <property type="entry name" value="Glutathione-S-Trfase_C_sf"/>
</dbReference>
<dbReference type="InterPro" id="IPR040079">
    <property type="entry name" value="Glutathione_S-Trfase"/>
</dbReference>
<dbReference type="InterPro" id="IPR004045">
    <property type="entry name" value="Glutathione_S-Trfase_N"/>
</dbReference>
<dbReference type="InterPro" id="IPR004046">
    <property type="entry name" value="GST_C"/>
</dbReference>
<dbReference type="InterPro" id="IPR050213">
    <property type="entry name" value="GST_superfamily"/>
</dbReference>
<dbReference type="InterPro" id="IPR036249">
    <property type="entry name" value="Thioredoxin-like_sf"/>
</dbReference>
<dbReference type="PANTHER" id="PTHR11571">
    <property type="entry name" value="GLUTATHIONE S-TRANSFERASE"/>
    <property type="match status" value="1"/>
</dbReference>
<dbReference type="PANTHER" id="PTHR11571:SF224">
    <property type="entry name" value="HEMATOPOIETIC PROSTAGLANDIN D SYNTHASE"/>
    <property type="match status" value="1"/>
</dbReference>
<dbReference type="Pfam" id="PF14497">
    <property type="entry name" value="GST_C_3"/>
    <property type="match status" value="1"/>
</dbReference>
<dbReference type="Pfam" id="PF02798">
    <property type="entry name" value="GST_N"/>
    <property type="match status" value="1"/>
</dbReference>
<dbReference type="SFLD" id="SFLDG01205">
    <property type="entry name" value="AMPS.1"/>
    <property type="match status" value="1"/>
</dbReference>
<dbReference type="SFLD" id="SFLDS00019">
    <property type="entry name" value="Glutathione_Transferase_(cytos"/>
    <property type="match status" value="1"/>
</dbReference>
<dbReference type="SUPFAM" id="SSF47616">
    <property type="entry name" value="GST C-terminal domain-like"/>
    <property type="match status" value="1"/>
</dbReference>
<dbReference type="SUPFAM" id="SSF52833">
    <property type="entry name" value="Thioredoxin-like"/>
    <property type="match status" value="1"/>
</dbReference>
<dbReference type="PROSITE" id="PS50405">
    <property type="entry name" value="GST_CTER"/>
    <property type="match status" value="1"/>
</dbReference>
<dbReference type="PROSITE" id="PS50404">
    <property type="entry name" value="GST_NTER"/>
    <property type="match status" value="1"/>
</dbReference>
<proteinExistence type="evidence at protein level"/>
<organism>
    <name type="scientific">Blattella germanica</name>
    <name type="common">German cockroach</name>
    <name type="synonym">Blatta germanica</name>
    <dbReference type="NCBI Taxonomy" id="6973"/>
    <lineage>
        <taxon>Eukaryota</taxon>
        <taxon>Metazoa</taxon>
        <taxon>Ecdysozoa</taxon>
        <taxon>Arthropoda</taxon>
        <taxon>Hexapoda</taxon>
        <taxon>Insecta</taxon>
        <taxon>Pterygota</taxon>
        <taxon>Neoptera</taxon>
        <taxon>Polyneoptera</taxon>
        <taxon>Dictyoptera</taxon>
        <taxon>Blattodea</taxon>
        <taxon>Blaberoidea</taxon>
        <taxon>Blattellidae</taxon>
        <taxon>Blattella</taxon>
    </lineage>
</organism>
<comment type="catalytic activity">
    <reaction>
        <text>RX + glutathione = an S-substituted glutathione + a halide anion + H(+)</text>
        <dbReference type="Rhea" id="RHEA:16437"/>
        <dbReference type="ChEBI" id="CHEBI:15378"/>
        <dbReference type="ChEBI" id="CHEBI:16042"/>
        <dbReference type="ChEBI" id="CHEBI:17792"/>
        <dbReference type="ChEBI" id="CHEBI:57925"/>
        <dbReference type="ChEBI" id="CHEBI:90779"/>
        <dbReference type="EC" id="2.5.1.18"/>
    </reaction>
</comment>
<comment type="allergen">
    <text>Causes an allergic reaction in human. Causes positive immediate skin tests in cockroach-allergic patients using as little as 3 pg of recombinant protein. Associated with asthma.</text>
</comment>
<comment type="similarity">
    <text evidence="4">Belongs to the GST superfamily. Sigma family.</text>
</comment>